<protein>
    <recommendedName>
        <fullName evidence="1">Small ribosomal subunit protein uS14A</fullName>
    </recommendedName>
    <alternativeName>
        <fullName evidence="3">30S ribosomal protein S14</fullName>
    </alternativeName>
</protein>
<accession>A1TGG0</accession>
<keyword id="KW-0687">Ribonucleoprotein</keyword>
<keyword id="KW-0689">Ribosomal protein</keyword>
<keyword id="KW-0694">RNA-binding</keyword>
<keyword id="KW-0699">rRNA-binding</keyword>
<name>RS14_MYCVP</name>
<feature type="chain" id="PRO_1000128459" description="Small ribosomal subunit protein uS14A">
    <location>
        <begin position="1"/>
        <end position="101"/>
    </location>
</feature>
<feature type="region of interest" description="Disordered" evidence="2">
    <location>
        <begin position="31"/>
        <end position="73"/>
    </location>
</feature>
<feature type="compositionally biased region" description="Basic and acidic residues" evidence="2">
    <location>
        <begin position="61"/>
        <end position="70"/>
    </location>
</feature>
<gene>
    <name evidence="1" type="primary">rpsN</name>
    <name type="ordered locus">Mvan_5491</name>
</gene>
<organism>
    <name type="scientific">Mycolicibacterium vanbaalenii (strain DSM 7251 / JCM 13017 / BCRC 16820 / KCTC 9966 / NRRL B-24157 / PYR-1)</name>
    <name type="common">Mycobacterium vanbaalenii</name>
    <dbReference type="NCBI Taxonomy" id="350058"/>
    <lineage>
        <taxon>Bacteria</taxon>
        <taxon>Bacillati</taxon>
        <taxon>Actinomycetota</taxon>
        <taxon>Actinomycetes</taxon>
        <taxon>Mycobacteriales</taxon>
        <taxon>Mycobacteriaceae</taxon>
        <taxon>Mycolicibacterium</taxon>
    </lineage>
</organism>
<proteinExistence type="inferred from homology"/>
<reference key="1">
    <citation type="submission" date="2006-12" db="EMBL/GenBank/DDBJ databases">
        <title>Complete sequence of Mycobacterium vanbaalenii PYR-1.</title>
        <authorList>
            <consortium name="US DOE Joint Genome Institute"/>
            <person name="Copeland A."/>
            <person name="Lucas S."/>
            <person name="Lapidus A."/>
            <person name="Barry K."/>
            <person name="Detter J.C."/>
            <person name="Glavina del Rio T."/>
            <person name="Hammon N."/>
            <person name="Israni S."/>
            <person name="Dalin E."/>
            <person name="Tice H."/>
            <person name="Pitluck S."/>
            <person name="Singan V."/>
            <person name="Schmutz J."/>
            <person name="Larimer F."/>
            <person name="Land M."/>
            <person name="Hauser L."/>
            <person name="Kyrpides N."/>
            <person name="Anderson I.J."/>
            <person name="Miller C."/>
            <person name="Richardson P."/>
        </authorList>
    </citation>
    <scope>NUCLEOTIDE SEQUENCE [LARGE SCALE GENOMIC DNA]</scope>
    <source>
        <strain>DSM 7251 / JCM 13017 / BCRC 16820 / KCTC 9966 / NRRL B-24157 / PYR-1</strain>
    </source>
</reference>
<sequence>MAKKSKIVQNERRREIVARHAERRAELKAIIKSPSTTPEARVAAQSELNRQPRDASPVRVRNRDSVDGRPRGHLRKFGLSRVRVRELAHQGQLPGVRKSSW</sequence>
<evidence type="ECO:0000255" key="1">
    <source>
        <dbReference type="HAMAP-Rule" id="MF_00537"/>
    </source>
</evidence>
<evidence type="ECO:0000256" key="2">
    <source>
        <dbReference type="SAM" id="MobiDB-lite"/>
    </source>
</evidence>
<evidence type="ECO:0000305" key="3"/>
<dbReference type="EMBL" id="CP000511">
    <property type="protein sequence ID" value="ABM16260.1"/>
    <property type="molecule type" value="Genomic_DNA"/>
</dbReference>
<dbReference type="RefSeq" id="WP_011782615.1">
    <property type="nucleotide sequence ID" value="NZ_JACKSD010000035.1"/>
</dbReference>
<dbReference type="SMR" id="A1TGG0"/>
<dbReference type="STRING" id="350058.Mvan_5491"/>
<dbReference type="KEGG" id="mva:Mvan_5491"/>
<dbReference type="eggNOG" id="COG0199">
    <property type="taxonomic scope" value="Bacteria"/>
</dbReference>
<dbReference type="HOGENOM" id="CLU_139869_0_1_11"/>
<dbReference type="Proteomes" id="UP000009159">
    <property type="component" value="Chromosome"/>
</dbReference>
<dbReference type="GO" id="GO:0015935">
    <property type="term" value="C:small ribosomal subunit"/>
    <property type="evidence" value="ECO:0007669"/>
    <property type="project" value="TreeGrafter"/>
</dbReference>
<dbReference type="GO" id="GO:0019843">
    <property type="term" value="F:rRNA binding"/>
    <property type="evidence" value="ECO:0007669"/>
    <property type="project" value="UniProtKB-UniRule"/>
</dbReference>
<dbReference type="GO" id="GO:0003735">
    <property type="term" value="F:structural constituent of ribosome"/>
    <property type="evidence" value="ECO:0007669"/>
    <property type="project" value="InterPro"/>
</dbReference>
<dbReference type="GO" id="GO:0006412">
    <property type="term" value="P:translation"/>
    <property type="evidence" value="ECO:0007669"/>
    <property type="project" value="UniProtKB-UniRule"/>
</dbReference>
<dbReference type="FunFam" id="1.10.287.1480:FF:000001">
    <property type="entry name" value="30S ribosomal protein S14"/>
    <property type="match status" value="1"/>
</dbReference>
<dbReference type="Gene3D" id="1.10.287.1480">
    <property type="match status" value="1"/>
</dbReference>
<dbReference type="HAMAP" id="MF_00537">
    <property type="entry name" value="Ribosomal_uS14_1"/>
    <property type="match status" value="1"/>
</dbReference>
<dbReference type="InterPro" id="IPR001209">
    <property type="entry name" value="Ribosomal_uS14"/>
</dbReference>
<dbReference type="InterPro" id="IPR023036">
    <property type="entry name" value="Ribosomal_uS14_bac/plastid"/>
</dbReference>
<dbReference type="NCBIfam" id="NF006477">
    <property type="entry name" value="PRK08881.1"/>
    <property type="match status" value="1"/>
</dbReference>
<dbReference type="PANTHER" id="PTHR19836">
    <property type="entry name" value="30S RIBOSOMAL PROTEIN S14"/>
    <property type="match status" value="1"/>
</dbReference>
<dbReference type="PANTHER" id="PTHR19836:SF23">
    <property type="entry name" value="SMALL RIBOSOMAL SUBUNIT PROTEIN US14A"/>
    <property type="match status" value="1"/>
</dbReference>
<dbReference type="Pfam" id="PF00253">
    <property type="entry name" value="Ribosomal_S14"/>
    <property type="match status" value="1"/>
</dbReference>
<dbReference type="SUPFAM" id="SSF57716">
    <property type="entry name" value="Glucocorticoid receptor-like (DNA-binding domain)"/>
    <property type="match status" value="1"/>
</dbReference>
<comment type="function">
    <text evidence="1">Binds 16S rRNA, required for the assembly of 30S particles and may also be responsible for determining the conformation of the 16S rRNA at the A site.</text>
</comment>
<comment type="subunit">
    <text evidence="1">Part of the 30S ribosomal subunit. Contacts proteins S3 and S10.</text>
</comment>
<comment type="similarity">
    <text evidence="1">Belongs to the universal ribosomal protein uS14 family.</text>
</comment>